<name>COX41_THEGE</name>
<sequence length="144" mass="17037">SVVKSEDFTLPAYVDRRDYPLPDVAHVKHLSASQKALKEKEKASWSSLSMDEKVELYRIKFKESFAEMNRRSNEWKTVVGTAMFFFGITALIVMWEKRYVYGPLPQTFDKEWVAMQTKRMLDMKVNPIQGLASKWDYEKNEWKK</sequence>
<proteinExistence type="inferred from homology"/>
<protein>
    <recommendedName>
        <fullName>Cytochrome c oxidase subunit 4 isoform 1, mitochondrial</fullName>
    </recommendedName>
    <alternativeName>
        <fullName>Cytochrome c oxidase polypeptide IV</fullName>
    </alternativeName>
    <alternativeName>
        <fullName>Cytochrome c oxidase subunit IV isoform 1</fullName>
        <shortName>COX IV-1</shortName>
    </alternativeName>
</protein>
<dbReference type="EMBL" id="AH005832">
    <property type="protein sequence ID" value="AAB97754.1"/>
    <property type="molecule type" value="Genomic_DNA"/>
</dbReference>
<dbReference type="SMR" id="O46581"/>
<dbReference type="UniPathway" id="UPA00705"/>
<dbReference type="Proteomes" id="UP000694411">
    <property type="component" value="Unplaced"/>
</dbReference>
<dbReference type="GO" id="GO:0005743">
    <property type="term" value="C:mitochondrial inner membrane"/>
    <property type="evidence" value="ECO:0000250"/>
    <property type="project" value="UniProtKB"/>
</dbReference>
<dbReference type="GO" id="GO:0045277">
    <property type="term" value="C:respiratory chain complex IV"/>
    <property type="evidence" value="ECO:0007669"/>
    <property type="project" value="InterPro"/>
</dbReference>
<dbReference type="GO" id="GO:0006123">
    <property type="term" value="P:mitochondrial electron transport, cytochrome c to oxygen"/>
    <property type="evidence" value="ECO:0007669"/>
    <property type="project" value="InterPro"/>
</dbReference>
<dbReference type="CDD" id="cd00922">
    <property type="entry name" value="Cyt_c_Oxidase_IV"/>
    <property type="match status" value="1"/>
</dbReference>
<dbReference type="FunFam" id="1.10.442.10:FF:000001">
    <property type="entry name" value="Cytochrome c oxidase subunit 4 isoform 1"/>
    <property type="match status" value="1"/>
</dbReference>
<dbReference type="Gene3D" id="1.10.442.10">
    <property type="entry name" value="Cytochrome c oxidase subunit IV"/>
    <property type="match status" value="1"/>
</dbReference>
<dbReference type="InterPro" id="IPR013288">
    <property type="entry name" value="Cyt_c_oxidase_su4"/>
</dbReference>
<dbReference type="InterPro" id="IPR004203">
    <property type="entry name" value="Cyt_c_oxidase_su4_fam"/>
</dbReference>
<dbReference type="InterPro" id="IPR036639">
    <property type="entry name" value="Cyt_c_oxidase_su4_sf"/>
</dbReference>
<dbReference type="PANTHER" id="PTHR10707:SF12">
    <property type="entry name" value="CYTOCHROME C OXIDASE SUBUNIT 4 ISOFORM 1, MITOCHONDRIAL"/>
    <property type="match status" value="1"/>
</dbReference>
<dbReference type="PANTHER" id="PTHR10707">
    <property type="entry name" value="CYTOCHROME C OXIDASE SUBUNIT IV"/>
    <property type="match status" value="1"/>
</dbReference>
<dbReference type="Pfam" id="PF02936">
    <property type="entry name" value="COX4"/>
    <property type="match status" value="1"/>
</dbReference>
<dbReference type="PRINTS" id="PR01873">
    <property type="entry name" value="CYTCOXIDASE4"/>
</dbReference>
<dbReference type="SUPFAM" id="SSF81406">
    <property type="entry name" value="Mitochondrial cytochrome c oxidase subunit IV"/>
    <property type="match status" value="1"/>
</dbReference>
<evidence type="ECO:0000250" key="1">
    <source>
        <dbReference type="UniProtKB" id="P00423"/>
    </source>
</evidence>
<evidence type="ECO:0000250" key="2">
    <source>
        <dbReference type="UniProtKB" id="P00424"/>
    </source>
</evidence>
<evidence type="ECO:0000250" key="3">
    <source>
        <dbReference type="UniProtKB" id="P10888"/>
    </source>
</evidence>
<evidence type="ECO:0000250" key="4">
    <source>
        <dbReference type="UniProtKB" id="P13073"/>
    </source>
</evidence>
<evidence type="ECO:0000250" key="5">
    <source>
        <dbReference type="UniProtKB" id="P19783"/>
    </source>
</evidence>
<evidence type="ECO:0000305" key="6"/>
<keyword id="KW-0007">Acetylation</keyword>
<keyword id="KW-0472">Membrane</keyword>
<keyword id="KW-0496">Mitochondrion</keyword>
<keyword id="KW-0999">Mitochondrion inner membrane</keyword>
<keyword id="KW-0597">Phosphoprotein</keyword>
<keyword id="KW-1185">Reference proteome</keyword>
<keyword id="KW-0812">Transmembrane</keyword>
<keyword id="KW-1133">Transmembrane helix</keyword>
<comment type="function">
    <text evidence="2">Component of the cytochrome c oxidase, the last enzyme in the mitochondrial electron transport chain which drives oxidative phosphorylation. The respiratory chain contains 3 multisubunit complexes succinate dehydrogenase (complex II, CII), ubiquinol-cytochrome c oxidoreductase (cytochrome b-c1 complex, complex III, CIII) and cytochrome c oxidase (complex IV, CIV), that cooperate to transfer electrons derived from NADH and succinate to molecular oxygen, creating an electrochemical gradient over the inner membrane that drives transmembrane transport and the ATP synthase. Cytochrome c oxidase is the component of the respiratory chain that catalyzes the reduction of oxygen to water. Electrons originating from reduced cytochrome c in the intermembrane space (IMS) are transferred via the dinuclear copper A center (CU(A)) of subunit 2 and heme A of subunit 1 to the active site in subunit 1, a binuclear center (BNC) formed by heme A3 and copper B (CU(B)). The BNC reduces molecular oxygen to 2 water molecules using 4 electrons from cytochrome c in the IMS and 4 protons from the mitochondrial matrix.</text>
</comment>
<comment type="pathway">
    <text evidence="2">Energy metabolism; oxidative phosphorylation.</text>
</comment>
<comment type="subunit">
    <text evidence="1 3 4 5">Component of the cytochrome c oxidase (complex IV, CIV), a multisubunit enzyme composed of 14 subunits. The complex is composed of a catalytic core of 3 subunits MT-CO1, MT-CO2 and MT-CO3, encoded in the mitochondrial DNA, and 11 supernumerary subunits COX4I, COX5A, COX5B, COX6A, COX6B, COX6C, COX7A, COX7B, COX7C, COX8 and NDUFA4, which are encoded in the nuclear genome. The complex exists as a monomer or a dimer and forms supercomplexes (SCs) in the inner mitochondrial membrane with NADH-ubiquinone oxidoreductase (complex I, CI) and ubiquinol-cytochrome c oxidoreductase (cytochrome b-c1 complex, complex III, CIII), resulting in different assemblies (supercomplex SCI(1)III(2)IV(1) and megacomplex MCI(2)III(2)IV(2)) (By similarity). Interacts with PHB2; the interaction decreases in absence of SPHK2 (By similarity). Interacts with AFG1L (By similarity). Interacts with ABCB7; this interaction allows the regulation of cellular iron homeostasis and cellular reactive oxygen species (ROS) levels in cardiomyocytes (By similarity). Interacts with FLVCR2; this interaction occurs in the absence of heme and is disrupted upon heme binding. Interacts with IRGC (By similarity).</text>
</comment>
<comment type="subcellular location">
    <subcellularLocation>
        <location evidence="1">Mitochondrion inner membrane</location>
        <topology evidence="1">Single-pass membrane protein</topology>
    </subcellularLocation>
</comment>
<comment type="similarity">
    <text evidence="6">Belongs to the cytochrome c oxidase IV family.</text>
</comment>
<reference key="1">
    <citation type="journal article" date="1997" name="J. Mol. Evol.">
        <title>Molecular evolution of cytochrome c oxidase subunit IV: evidence for positive selection in simian primates.</title>
        <authorList>
            <person name="Wu W."/>
            <person name="Goodman M."/>
            <person name="Lomax M.I."/>
            <person name="Grossman L.I."/>
        </authorList>
    </citation>
    <scope>NUCLEOTIDE SEQUENCE [GENOMIC DNA]</scope>
</reference>
<organism>
    <name type="scientific">Theropithecus gelada</name>
    <name type="common">Gelada baboon</name>
    <dbReference type="NCBI Taxonomy" id="9565"/>
    <lineage>
        <taxon>Eukaryota</taxon>
        <taxon>Metazoa</taxon>
        <taxon>Chordata</taxon>
        <taxon>Craniata</taxon>
        <taxon>Vertebrata</taxon>
        <taxon>Euteleostomi</taxon>
        <taxon>Mammalia</taxon>
        <taxon>Eutheria</taxon>
        <taxon>Euarchontoglires</taxon>
        <taxon>Primates</taxon>
        <taxon>Haplorrhini</taxon>
        <taxon>Catarrhini</taxon>
        <taxon>Cercopithecidae</taxon>
        <taxon>Cercopithecinae</taxon>
        <taxon>Theropithecus</taxon>
    </lineage>
</organism>
<feature type="chain" id="PRO_0000194084" description="Cytochrome c oxidase subunit 4 isoform 1, mitochondrial">
    <location>
        <begin position="1" status="less than"/>
        <end position="144"/>
    </location>
</feature>
<feature type="topological domain" description="Mitochondrial matrix" evidence="1">
    <location>
        <begin position="1" status="less than"/>
        <end position="73"/>
    </location>
</feature>
<feature type="transmembrane region" description="Helical" evidence="1">
    <location>
        <begin position="74"/>
        <end position="99"/>
    </location>
</feature>
<feature type="topological domain" description="Mitochondrial intermembrane" evidence="1">
    <location>
        <begin position="100"/>
        <end position="144"/>
    </location>
</feature>
<feature type="modified residue" description="N6-acetyllysine; alternate" evidence="5">
    <location>
        <position position="4"/>
    </location>
</feature>
<feature type="modified residue" description="N6-succinyllysine; alternate" evidence="5">
    <location>
        <position position="4"/>
    </location>
</feature>
<feature type="modified residue" description="N6-acetyllysine" evidence="4">
    <location>
        <position position="28"/>
    </location>
</feature>
<feature type="modified residue" description="Phosphoserine" evidence="3">
    <location>
        <position position="31"/>
    </location>
</feature>
<feature type="modified residue" description="Phosphoserine" evidence="3">
    <location>
        <position position="33"/>
    </location>
</feature>
<feature type="modified residue" description="N6-acetyllysine; alternate" evidence="4">
    <location>
        <position position="35"/>
    </location>
</feature>
<feature type="modified residue" description="N6-succinyllysine; alternate" evidence="5">
    <location>
        <position position="35"/>
    </location>
</feature>
<feature type="modified residue" description="N6-acetyllysine" evidence="5">
    <location>
        <position position="42"/>
    </location>
</feature>
<feature type="non-terminal residue">
    <location>
        <position position="1"/>
    </location>
</feature>
<gene>
    <name type="primary">COX4I1</name>
    <name type="synonym">COX4</name>
</gene>
<accession>O46581</accession>